<proteinExistence type="evidence at transcript level"/>
<reference key="1">
    <citation type="submission" date="2001-03" db="EMBL/GenBank/DDBJ databases">
        <title>Molecular and biochemical characterization of caffeic acid O-methyltransferase from Catharanthus roseus.</title>
        <authorList>
            <person name="Schroeder G."/>
            <person name="Wehinger E."/>
            <person name="Schroeder J."/>
        </authorList>
    </citation>
    <scope>NUCLEOTIDE SEQUENCE [MRNA]</scope>
</reference>
<dbReference type="EC" id="2.1.1.68"/>
<dbReference type="EMBL" id="AY028439">
    <property type="protein sequence ID" value="AAK20170.1"/>
    <property type="molecule type" value="mRNA"/>
</dbReference>
<dbReference type="SMR" id="Q8W013"/>
<dbReference type="OrthoDB" id="1606438at2759"/>
<dbReference type="UniPathway" id="UPA00711"/>
<dbReference type="GO" id="GO:0047763">
    <property type="term" value="F:caffeate O-methyltransferase activity"/>
    <property type="evidence" value="ECO:0007669"/>
    <property type="project" value="UniProtKB-EC"/>
</dbReference>
<dbReference type="GO" id="GO:0046983">
    <property type="term" value="F:protein dimerization activity"/>
    <property type="evidence" value="ECO:0007669"/>
    <property type="project" value="InterPro"/>
</dbReference>
<dbReference type="GO" id="GO:0009809">
    <property type="term" value="P:lignin biosynthetic process"/>
    <property type="evidence" value="ECO:0007669"/>
    <property type="project" value="UniProtKB-KW"/>
</dbReference>
<dbReference type="GO" id="GO:0032259">
    <property type="term" value="P:methylation"/>
    <property type="evidence" value="ECO:0007669"/>
    <property type="project" value="UniProtKB-KW"/>
</dbReference>
<dbReference type="CDD" id="cd02440">
    <property type="entry name" value="AdoMet_MTases"/>
    <property type="match status" value="1"/>
</dbReference>
<dbReference type="FunFam" id="1.10.10.10:FF:000357">
    <property type="entry name" value="Caffeic acid 3-O-methyltransferase"/>
    <property type="match status" value="1"/>
</dbReference>
<dbReference type="FunFam" id="3.40.50.150:FF:000061">
    <property type="entry name" value="Caffeic acid O-methyltransferase"/>
    <property type="match status" value="1"/>
</dbReference>
<dbReference type="Gene3D" id="3.40.50.150">
    <property type="entry name" value="Vaccinia Virus protein VP39"/>
    <property type="match status" value="1"/>
</dbReference>
<dbReference type="Gene3D" id="1.10.10.10">
    <property type="entry name" value="Winged helix-like DNA-binding domain superfamily/Winged helix DNA-binding domain"/>
    <property type="match status" value="1"/>
</dbReference>
<dbReference type="InterPro" id="IPR016461">
    <property type="entry name" value="COMT-like"/>
</dbReference>
<dbReference type="InterPro" id="IPR001077">
    <property type="entry name" value="O_MeTrfase_dom"/>
</dbReference>
<dbReference type="InterPro" id="IPR012967">
    <property type="entry name" value="Plant_O-MeTrfase_dimerisation"/>
</dbReference>
<dbReference type="InterPro" id="IPR029063">
    <property type="entry name" value="SAM-dependent_MTases_sf"/>
</dbReference>
<dbReference type="InterPro" id="IPR036388">
    <property type="entry name" value="WH-like_DNA-bd_sf"/>
</dbReference>
<dbReference type="InterPro" id="IPR036390">
    <property type="entry name" value="WH_DNA-bd_sf"/>
</dbReference>
<dbReference type="PANTHER" id="PTHR11746">
    <property type="entry name" value="O-METHYLTRANSFERASE"/>
    <property type="match status" value="1"/>
</dbReference>
<dbReference type="Pfam" id="PF08100">
    <property type="entry name" value="Dimerisation"/>
    <property type="match status" value="1"/>
</dbReference>
<dbReference type="Pfam" id="PF00891">
    <property type="entry name" value="Methyltransf_2"/>
    <property type="match status" value="1"/>
</dbReference>
<dbReference type="PIRSF" id="PIRSF005739">
    <property type="entry name" value="O-mtase"/>
    <property type="match status" value="1"/>
</dbReference>
<dbReference type="SUPFAM" id="SSF53335">
    <property type="entry name" value="S-adenosyl-L-methionine-dependent methyltransferases"/>
    <property type="match status" value="1"/>
</dbReference>
<dbReference type="SUPFAM" id="SSF46785">
    <property type="entry name" value="Winged helix' DNA-binding domain"/>
    <property type="match status" value="1"/>
</dbReference>
<dbReference type="PROSITE" id="PS51683">
    <property type="entry name" value="SAM_OMT_II"/>
    <property type="match status" value="1"/>
</dbReference>
<name>COMT1_CATRO</name>
<gene>
    <name type="primary">COMT1</name>
</gene>
<feature type="chain" id="PRO_0000063198" description="Caffeic acid 3-O-methyltransferase">
    <location>
        <begin position="1"/>
        <end position="363"/>
    </location>
</feature>
<feature type="region of interest" description="Substrate binding" evidence="1">
    <location>
        <begin position="162"/>
        <end position="180"/>
    </location>
</feature>
<feature type="active site" description="Proton acceptor" evidence="2">
    <location>
        <position position="269"/>
    </location>
</feature>
<feature type="binding site" evidence="1">
    <location>
        <begin position="130"/>
        <end position="136"/>
    </location>
    <ligand>
        <name>substrate</name>
    </ligand>
</feature>
<feature type="binding site" evidence="2">
    <location>
        <position position="208"/>
    </location>
    <ligand>
        <name>S-adenosyl-L-methionine</name>
        <dbReference type="ChEBI" id="CHEBI:59789"/>
    </ligand>
</feature>
<feature type="binding site" evidence="2">
    <location>
        <position position="231"/>
    </location>
    <ligand>
        <name>S-adenosyl-L-methionine</name>
        <dbReference type="ChEBI" id="CHEBI:59789"/>
    </ligand>
</feature>
<feature type="binding site" evidence="2">
    <location>
        <position position="251"/>
    </location>
    <ligand>
        <name>S-adenosyl-L-methionine</name>
        <dbReference type="ChEBI" id="CHEBI:59789"/>
    </ligand>
</feature>
<feature type="binding site" evidence="2">
    <location>
        <position position="252"/>
    </location>
    <ligand>
        <name>S-adenosyl-L-methionine</name>
        <dbReference type="ChEBI" id="CHEBI:59789"/>
    </ligand>
</feature>
<feature type="binding site" evidence="2">
    <location>
        <position position="265"/>
    </location>
    <ligand>
        <name>S-adenosyl-L-methionine</name>
        <dbReference type="ChEBI" id="CHEBI:59789"/>
    </ligand>
</feature>
<sequence>MGSANPDNKNSMTKEEEEACLSAMRLASASVLPMVLKSAIELDLLELIKKSGPGAYVSPSELAAQLPTQNPDAPVMLDRILRLLASYSVLNCTLKDLPDGGIERLYSLAPVCKFLTKNEDGVSMAALLLMNQDKVLMESWYHLKDAVLEGGIPFNKAYGMTAFEYHGKDPRFNKVFNQGMSNHSTIIMKKILEIYQGFQGLKTVVDVGGGTGATLNMIVSKYPSIKGINFDLPHVIEDAPSYPGVDHVGGDMFVSVPKGDAIFMKWICHDWSDAHCLKFLKNCHEALPENGKVILAECLLPEAPDSTLSTQNTVHVDVIMLAHNPGGKERTEKEFEALAKGAGFRGFIKVCCAYNSWIMELLK</sequence>
<accession>Q8W013</accession>
<keyword id="KW-0438">Lignin biosynthesis</keyword>
<keyword id="KW-0489">Methyltransferase</keyword>
<keyword id="KW-0949">S-adenosyl-L-methionine</keyword>
<keyword id="KW-0808">Transferase</keyword>
<comment type="function">
    <text>Catalyzes the conversion of caffeic acid to ferulic acid and of 5-hydroxyferulic acid to sinapic acid. The resulting products may subsequently be converted to the corresponding alcohols that are incorporated into lignins.</text>
</comment>
<comment type="catalytic activity">
    <reaction>
        <text>(E)-caffeate + S-adenosyl-L-methionine = (E)-ferulate + S-adenosyl-L-homocysteine + H(+)</text>
        <dbReference type="Rhea" id="RHEA:20225"/>
        <dbReference type="ChEBI" id="CHEBI:15378"/>
        <dbReference type="ChEBI" id="CHEBI:29749"/>
        <dbReference type="ChEBI" id="CHEBI:57770"/>
        <dbReference type="ChEBI" id="CHEBI:57856"/>
        <dbReference type="ChEBI" id="CHEBI:59789"/>
        <dbReference type="EC" id="2.1.1.68"/>
    </reaction>
</comment>
<comment type="pathway">
    <text>Aromatic compound metabolism; phenylpropanoid biosynthesis.</text>
</comment>
<comment type="subunit">
    <text evidence="1">Homodimer.</text>
</comment>
<comment type="similarity">
    <text evidence="2">Belongs to the class I-like SAM-binding methyltransferase superfamily. Cation-independent O-methyltransferase family. COMT subfamily.</text>
</comment>
<organism>
    <name type="scientific">Catharanthus roseus</name>
    <name type="common">Madagascar periwinkle</name>
    <name type="synonym">Vinca rosea</name>
    <dbReference type="NCBI Taxonomy" id="4058"/>
    <lineage>
        <taxon>Eukaryota</taxon>
        <taxon>Viridiplantae</taxon>
        <taxon>Streptophyta</taxon>
        <taxon>Embryophyta</taxon>
        <taxon>Tracheophyta</taxon>
        <taxon>Spermatophyta</taxon>
        <taxon>Magnoliopsida</taxon>
        <taxon>eudicotyledons</taxon>
        <taxon>Gunneridae</taxon>
        <taxon>Pentapetalae</taxon>
        <taxon>asterids</taxon>
        <taxon>lamiids</taxon>
        <taxon>Gentianales</taxon>
        <taxon>Apocynaceae</taxon>
        <taxon>Rauvolfioideae</taxon>
        <taxon>Vinceae</taxon>
        <taxon>Catharanthinae</taxon>
        <taxon>Catharanthus</taxon>
    </lineage>
</organism>
<protein>
    <recommendedName>
        <fullName>Caffeic acid 3-O-methyltransferase</fullName>
        <shortName>CAOMT</shortName>
        <shortName>COMT</shortName>
        <ecNumber>2.1.1.68</ecNumber>
    </recommendedName>
    <alternativeName>
        <fullName>S-adenosysl-L-methionine:caffeic acid 3-O-methyltransferase</fullName>
    </alternativeName>
</protein>
<evidence type="ECO:0000250" key="1"/>
<evidence type="ECO:0000255" key="2">
    <source>
        <dbReference type="PROSITE-ProRule" id="PRU01020"/>
    </source>
</evidence>